<reference key="1">
    <citation type="journal article" date="2005" name="Science">
        <title>The transcriptional landscape of the mammalian genome.</title>
        <authorList>
            <person name="Carninci P."/>
            <person name="Kasukawa T."/>
            <person name="Katayama S."/>
            <person name="Gough J."/>
            <person name="Frith M.C."/>
            <person name="Maeda N."/>
            <person name="Oyama R."/>
            <person name="Ravasi T."/>
            <person name="Lenhard B."/>
            <person name="Wells C."/>
            <person name="Kodzius R."/>
            <person name="Shimokawa K."/>
            <person name="Bajic V.B."/>
            <person name="Brenner S.E."/>
            <person name="Batalov S."/>
            <person name="Forrest A.R."/>
            <person name="Zavolan M."/>
            <person name="Davis M.J."/>
            <person name="Wilming L.G."/>
            <person name="Aidinis V."/>
            <person name="Allen J.E."/>
            <person name="Ambesi-Impiombato A."/>
            <person name="Apweiler R."/>
            <person name="Aturaliya R.N."/>
            <person name="Bailey T.L."/>
            <person name="Bansal M."/>
            <person name="Baxter L."/>
            <person name="Beisel K.W."/>
            <person name="Bersano T."/>
            <person name="Bono H."/>
            <person name="Chalk A.M."/>
            <person name="Chiu K.P."/>
            <person name="Choudhary V."/>
            <person name="Christoffels A."/>
            <person name="Clutterbuck D.R."/>
            <person name="Crowe M.L."/>
            <person name="Dalla E."/>
            <person name="Dalrymple B.P."/>
            <person name="de Bono B."/>
            <person name="Della Gatta G."/>
            <person name="di Bernardo D."/>
            <person name="Down T."/>
            <person name="Engstrom P."/>
            <person name="Fagiolini M."/>
            <person name="Faulkner G."/>
            <person name="Fletcher C.F."/>
            <person name="Fukushima T."/>
            <person name="Furuno M."/>
            <person name="Futaki S."/>
            <person name="Gariboldi M."/>
            <person name="Georgii-Hemming P."/>
            <person name="Gingeras T.R."/>
            <person name="Gojobori T."/>
            <person name="Green R.E."/>
            <person name="Gustincich S."/>
            <person name="Harbers M."/>
            <person name="Hayashi Y."/>
            <person name="Hensch T.K."/>
            <person name="Hirokawa N."/>
            <person name="Hill D."/>
            <person name="Huminiecki L."/>
            <person name="Iacono M."/>
            <person name="Ikeo K."/>
            <person name="Iwama A."/>
            <person name="Ishikawa T."/>
            <person name="Jakt M."/>
            <person name="Kanapin A."/>
            <person name="Katoh M."/>
            <person name="Kawasawa Y."/>
            <person name="Kelso J."/>
            <person name="Kitamura H."/>
            <person name="Kitano H."/>
            <person name="Kollias G."/>
            <person name="Krishnan S.P."/>
            <person name="Kruger A."/>
            <person name="Kummerfeld S.K."/>
            <person name="Kurochkin I.V."/>
            <person name="Lareau L.F."/>
            <person name="Lazarevic D."/>
            <person name="Lipovich L."/>
            <person name="Liu J."/>
            <person name="Liuni S."/>
            <person name="McWilliam S."/>
            <person name="Madan Babu M."/>
            <person name="Madera M."/>
            <person name="Marchionni L."/>
            <person name="Matsuda H."/>
            <person name="Matsuzawa S."/>
            <person name="Miki H."/>
            <person name="Mignone F."/>
            <person name="Miyake S."/>
            <person name="Morris K."/>
            <person name="Mottagui-Tabar S."/>
            <person name="Mulder N."/>
            <person name="Nakano N."/>
            <person name="Nakauchi H."/>
            <person name="Ng P."/>
            <person name="Nilsson R."/>
            <person name="Nishiguchi S."/>
            <person name="Nishikawa S."/>
            <person name="Nori F."/>
            <person name="Ohara O."/>
            <person name="Okazaki Y."/>
            <person name="Orlando V."/>
            <person name="Pang K.C."/>
            <person name="Pavan W.J."/>
            <person name="Pavesi G."/>
            <person name="Pesole G."/>
            <person name="Petrovsky N."/>
            <person name="Piazza S."/>
            <person name="Reed J."/>
            <person name="Reid J.F."/>
            <person name="Ring B.Z."/>
            <person name="Ringwald M."/>
            <person name="Rost B."/>
            <person name="Ruan Y."/>
            <person name="Salzberg S.L."/>
            <person name="Sandelin A."/>
            <person name="Schneider C."/>
            <person name="Schoenbach C."/>
            <person name="Sekiguchi K."/>
            <person name="Semple C.A."/>
            <person name="Seno S."/>
            <person name="Sessa L."/>
            <person name="Sheng Y."/>
            <person name="Shibata Y."/>
            <person name="Shimada H."/>
            <person name="Shimada K."/>
            <person name="Silva D."/>
            <person name="Sinclair B."/>
            <person name="Sperling S."/>
            <person name="Stupka E."/>
            <person name="Sugiura K."/>
            <person name="Sultana R."/>
            <person name="Takenaka Y."/>
            <person name="Taki K."/>
            <person name="Tammoja K."/>
            <person name="Tan S.L."/>
            <person name="Tang S."/>
            <person name="Taylor M.S."/>
            <person name="Tegner J."/>
            <person name="Teichmann S.A."/>
            <person name="Ueda H.R."/>
            <person name="van Nimwegen E."/>
            <person name="Verardo R."/>
            <person name="Wei C.L."/>
            <person name="Yagi K."/>
            <person name="Yamanishi H."/>
            <person name="Zabarovsky E."/>
            <person name="Zhu S."/>
            <person name="Zimmer A."/>
            <person name="Hide W."/>
            <person name="Bult C."/>
            <person name="Grimmond S.M."/>
            <person name="Teasdale R.D."/>
            <person name="Liu E.T."/>
            <person name="Brusic V."/>
            <person name="Quackenbush J."/>
            <person name="Wahlestedt C."/>
            <person name="Mattick J.S."/>
            <person name="Hume D.A."/>
            <person name="Kai C."/>
            <person name="Sasaki D."/>
            <person name="Tomaru Y."/>
            <person name="Fukuda S."/>
            <person name="Kanamori-Katayama M."/>
            <person name="Suzuki M."/>
            <person name="Aoki J."/>
            <person name="Arakawa T."/>
            <person name="Iida J."/>
            <person name="Imamura K."/>
            <person name="Itoh M."/>
            <person name="Kato T."/>
            <person name="Kawaji H."/>
            <person name="Kawagashira N."/>
            <person name="Kawashima T."/>
            <person name="Kojima M."/>
            <person name="Kondo S."/>
            <person name="Konno H."/>
            <person name="Nakano K."/>
            <person name="Ninomiya N."/>
            <person name="Nishio T."/>
            <person name="Okada M."/>
            <person name="Plessy C."/>
            <person name="Shibata K."/>
            <person name="Shiraki T."/>
            <person name="Suzuki S."/>
            <person name="Tagami M."/>
            <person name="Waki K."/>
            <person name="Watahiki A."/>
            <person name="Okamura-Oho Y."/>
            <person name="Suzuki H."/>
            <person name="Kawai J."/>
            <person name="Hayashizaki Y."/>
        </authorList>
    </citation>
    <scope>NUCLEOTIDE SEQUENCE [LARGE SCALE MRNA] (ISOFORMS 1 AND 3)</scope>
    <source>
        <strain>C57BL/6J</strain>
        <tissue>Eye</tissue>
        <tissue>Spinal ganglion</tissue>
    </source>
</reference>
<reference key="2">
    <citation type="journal article" date="2004" name="Genome Res.">
        <title>The status, quality, and expansion of the NIH full-length cDNA project: the Mammalian Gene Collection (MGC).</title>
        <authorList>
            <consortium name="The MGC Project Team"/>
        </authorList>
    </citation>
    <scope>NUCLEOTIDE SEQUENCE [LARGE SCALE MRNA] (ISOFORMS 1 AND 2)</scope>
    <source>
        <strain>C57BL/6J</strain>
        <tissue>Brain</tissue>
    </source>
</reference>
<reference key="3">
    <citation type="journal article" date="2008" name="Nat. Immunol.">
        <title>Mincle is an ITAM-coupled activating receptor that senses damaged cells.</title>
        <authorList>
            <person name="Yamasaki S."/>
            <person name="Ishikawa E."/>
            <person name="Sakuma M."/>
            <person name="Hara H."/>
            <person name="Ogata K."/>
            <person name="Saito T."/>
        </authorList>
    </citation>
    <scope>INTERACTION WITH CLEC4E</scope>
</reference>
<reference key="4">
    <citation type="journal article" date="2010" name="Cell">
        <title>A tissue-specific atlas of mouse protein phosphorylation and expression.</title>
        <authorList>
            <person name="Huttlin E.L."/>
            <person name="Jedrychowski M.P."/>
            <person name="Elias J.E."/>
            <person name="Goswami T."/>
            <person name="Rad R."/>
            <person name="Beausoleil S.A."/>
            <person name="Villen J."/>
            <person name="Haas W."/>
            <person name="Sowa M.E."/>
            <person name="Gygi S.P."/>
        </authorList>
    </citation>
    <scope>PHOSPHORYLATION [LARGE SCALE ANALYSIS] AT SER-416 AND SER-884</scope>
    <scope>IDENTIFICATION BY MASS SPECTROMETRY [LARGE SCALE ANALYSIS]</scope>
    <source>
        <tissue>Brain</tissue>
        <tissue>Kidney</tissue>
    </source>
</reference>
<keyword id="KW-0007">Acetylation</keyword>
<keyword id="KW-0025">Alternative splicing</keyword>
<keyword id="KW-1017">Isopeptide bond</keyword>
<keyword id="KW-0488">Methylation</keyword>
<keyword id="KW-0539">Nucleus</keyword>
<keyword id="KW-0597">Phosphoprotein</keyword>
<keyword id="KW-1185">Reference proteome</keyword>
<keyword id="KW-0678">Repressor</keyword>
<keyword id="KW-0804">Transcription</keyword>
<keyword id="KW-0805">Transcription regulation</keyword>
<keyword id="KW-0832">Ubl conjugation</keyword>
<comment type="function">
    <text evidence="1">Acts as a transcriptional repressor. May function in the assembly and/or enzymatic activity of the mSin3A corepressor complex or in mediating interactions between the complex and other regulatory complexes (By similarity).</text>
</comment>
<comment type="subunit">
    <text evidence="1 4">Component of a mSin3A corepressor complex that contains SIN3A, SAP130, SUDS3/SAP45, ARID4B/SAP180, HDAC1 and HDAC2 (By similarity). Interacts (released by dead or dying cells) with CLEC4E.</text>
</comment>
<comment type="subcellular location">
    <subcellularLocation>
        <location evidence="1">Nucleus</location>
    </subcellularLocation>
</comment>
<comment type="alternative products">
    <event type="alternative splicing"/>
    <isoform>
        <id>Q8BIH0-1</id>
        <name>1</name>
        <sequence type="displayed"/>
    </isoform>
    <isoform>
        <id>Q8BIH0-2</id>
        <name>2</name>
        <sequence type="described" ref="VSP_024357"/>
    </isoform>
    <isoform>
        <id>Q8BIH0-3</id>
        <name>3</name>
        <sequence type="described" ref="VSP_024358 VSP_024359"/>
    </isoform>
</comment>
<comment type="domain">
    <text evidence="1">The N-terminus may interact with a transcriptional coactivator.</text>
</comment>
<comment type="domain">
    <text evidence="1">The C-terminus may interact with HDAC-dependent and HDAC-independent corepressors.</text>
</comment>
<comment type="PTM">
    <text evidence="1">Acetylated.</text>
</comment>
<comment type="PTM">
    <text evidence="1">Sumoylated with SUMO1.</text>
</comment>
<comment type="similarity">
    <text evidence="7">Belongs to the SAP130 family.</text>
</comment>
<comment type="sequence caution" evidence="7">
    <conflict type="erroneous initiation">
        <sequence resource="EMBL-CDS" id="AAH66030"/>
    </conflict>
</comment>
<sequence length="1057" mass="111228">MSSQQFPRLGTPSPGLSQPPSQIASSGSAGLINQVATVNDEAGRDADVGTREHVGPSSSLPPREEKQEPVVVRPYPQVQMLPAHHAVASATPVAVTAPPAHLTPAVPLSFSEGLMKPPPKPTMPSRPIAPAPPSTMSLPPKVPGQVTVTMESSIPQASAIPVATISGQQGHPSNLHHIMTTNVQMSIIRSNAPGPPLHIGASHLPRGAAAAAVMSSSKVTTVLRPTSQLPNAATAQPAVQHLIHQPIQSRPPVTTSSTIPPAVVATVSATRAQSPVITTTAAHAADSTLSRPTLSIQHPPSAAISIQRPAQSRDVTTRITLPSHPALGTPKQQLHTMAQKTIFSTGTPVAAATVAPILATNTLPSTTTAGSVSHTQAPTSTIVTMTMPSHSSHATAVTTSNIPVAKVVPQQITHTSPRIQPDYPPERSSLIPISGHRASPNPVAMETRNDNRPSVPVQFQYFLPTYPPSAYPLAAHTYTPITSSVSTIRQYPVSAQAPNSTITAQTGVGVASTVHLNPMQLMTVDASHARHIQGIQPAPISTQGIQPAPIGTSGIQPAPIGTPGIHSAAPINTQGLQPAAMANQQPQPEGKTSAVVLADGATIVANPISNPFSAAPAATTVVQTHSQSASTNTPAQGSSPRPSILRKKPATDGMAVRKTLLPPQPPDVATPRVESSMRSASGSPRPAGAKPKSEVHVSIATPVTVSLETISNQNAEQPTVAVPPTAQQPPPTIPSMIAAASPPSQPAIALSTIPGAVPVTPPITTIAATPTLSAPVGGTPSTVLGPPVPEIKVKEEAEPVDITRPVSTVPPLATNTVSPSLALLASNLSMPPSDLPPGASPRKKPRKQQHVISTEEGDMMETNSTDDEKSAAKSLLVKAEKRKSPPKEYIDEEGVRYVPVRPRPPITLLRHYRNPWKAAYHHFQRYSDVRVKEEKKAMLQEIANQKGVSCRAQGWKVHLCAAQLLQLTNLEHDVYERLTNLQEGIIPKKKAATDDDLHRINELIQGNMQRCKLVMDQISEARDSMLKVLDHKDRVLKLLNKNGTVKKVSKLKRKEKV</sequence>
<accession>Q8BIH0</accession>
<accession>Q6NZP5</accession>
<accession>Q6P553</accession>
<accession>Q8BID9</accession>
<accession>Q9CSU1</accession>
<feature type="chain" id="PRO_0000283737" description="Histone deacetylase complex subunit SAP130">
    <location>
        <begin position="1"/>
        <end position="1057"/>
    </location>
</feature>
<feature type="region of interest" description="Disordered" evidence="3">
    <location>
        <begin position="1"/>
        <end position="69"/>
    </location>
</feature>
<feature type="region of interest" description="Disordered" evidence="3">
    <location>
        <begin position="619"/>
        <end position="695"/>
    </location>
</feature>
<feature type="region of interest" description="Disordered" evidence="3">
    <location>
        <begin position="718"/>
        <end position="740"/>
    </location>
</feature>
<feature type="region of interest" description="Disordered" evidence="3">
    <location>
        <begin position="827"/>
        <end position="873"/>
    </location>
</feature>
<feature type="region of interest" description="Interactions with SIN3A and HDAC1" evidence="1">
    <location>
        <begin position="845"/>
        <end position="1057"/>
    </location>
</feature>
<feature type="compositionally biased region" description="Polar residues" evidence="3">
    <location>
        <begin position="14"/>
        <end position="28"/>
    </location>
</feature>
<feature type="compositionally biased region" description="Basic and acidic residues" evidence="3">
    <location>
        <begin position="41"/>
        <end position="54"/>
    </location>
</feature>
<feature type="compositionally biased region" description="Polar residues" evidence="3">
    <location>
        <begin position="620"/>
        <end position="641"/>
    </location>
</feature>
<feature type="modified residue" description="Omega-N-methylarginine" evidence="2">
    <location>
        <position position="206"/>
    </location>
</feature>
<feature type="modified residue" description="Phosphothreonine" evidence="2">
    <location>
        <position position="329"/>
    </location>
</feature>
<feature type="modified residue" description="Phosphoserine" evidence="8">
    <location>
        <position position="416"/>
    </location>
</feature>
<feature type="modified residue" description="Phosphoserine" evidence="2">
    <location>
        <position position="439"/>
    </location>
</feature>
<feature type="modified residue" description="Phosphoserine" evidence="2">
    <location>
        <position position="864"/>
    </location>
</feature>
<feature type="modified residue" description="Phosphothreonine" evidence="2">
    <location>
        <position position="865"/>
    </location>
</feature>
<feature type="modified residue" description="Phosphoserine" evidence="8">
    <location>
        <position position="884"/>
    </location>
</feature>
<feature type="cross-link" description="Glycyl lysine isopeptide (Lys-Gly) (interchain with G-Cter in SUMO2)" evidence="2">
    <location>
        <position position="794"/>
    </location>
</feature>
<feature type="cross-link" description="Glycyl lysine isopeptide (Lys-Gly) (interchain with G-Cter in SUMO2)" evidence="2">
    <location>
        <position position="873"/>
    </location>
</feature>
<feature type="cross-link" description="Glycyl lysine isopeptide (Lys-Gly) (interchain with G-Cter in SUMO2)" evidence="2">
    <location>
        <position position="878"/>
    </location>
</feature>
<feature type="splice variant" id="VSP_024357" description="In isoform 2." evidence="5">
    <location>
        <begin position="1"/>
        <end position="178"/>
    </location>
</feature>
<feature type="splice variant" id="VSP_024358" description="In isoform 3." evidence="6">
    <original>KTIFSTGTP</original>
    <variation>VRTVTPPEG</variation>
    <location>
        <begin position="340"/>
        <end position="348"/>
    </location>
</feature>
<feature type="splice variant" id="VSP_024359" description="In isoform 3." evidence="6">
    <location>
        <begin position="349"/>
        <end position="1057"/>
    </location>
</feature>
<feature type="sequence conflict" description="In Ref. 1; BAC35469." evidence="7" ref="1">
    <location>
        <position position="594"/>
    </location>
</feature>
<protein>
    <recommendedName>
        <fullName>Histone deacetylase complex subunit SAP130</fullName>
    </recommendedName>
    <alternativeName>
        <fullName>130 kDa Sin3-associated polypeptide</fullName>
    </alternativeName>
    <alternativeName>
        <fullName>Sin3-associated polypeptide p130</fullName>
    </alternativeName>
</protein>
<gene>
    <name type="primary">Sap130</name>
</gene>
<dbReference type="EMBL" id="AK011978">
    <property type="protein sequence ID" value="BAB27953.1"/>
    <property type="molecule type" value="mRNA"/>
</dbReference>
<dbReference type="EMBL" id="AK053675">
    <property type="protein sequence ID" value="BAC35469.1"/>
    <property type="molecule type" value="mRNA"/>
</dbReference>
<dbReference type="EMBL" id="AK084078">
    <property type="protein sequence ID" value="BAC39113.1"/>
    <property type="molecule type" value="mRNA"/>
</dbReference>
<dbReference type="EMBL" id="BC063075">
    <property type="protein sequence ID" value="AAH63075.1"/>
    <property type="molecule type" value="mRNA"/>
</dbReference>
<dbReference type="EMBL" id="BC066030">
    <property type="protein sequence ID" value="AAH66030.1"/>
    <property type="status" value="ALT_INIT"/>
    <property type="molecule type" value="mRNA"/>
</dbReference>
<dbReference type="CCDS" id="CCDS89207.1">
    <molecule id="Q8BIH0-1"/>
</dbReference>
<dbReference type="RefSeq" id="NP_001344483.1">
    <molecule id="Q8BIH0-1"/>
    <property type="nucleotide sequence ID" value="NM_001357554.2"/>
</dbReference>
<dbReference type="RefSeq" id="NP_766553.1">
    <property type="nucleotide sequence ID" value="NM_172965.2"/>
</dbReference>
<dbReference type="RefSeq" id="XP_006526014.1">
    <molecule id="Q8BIH0-1"/>
    <property type="nucleotide sequence ID" value="XM_006525951.4"/>
</dbReference>
<dbReference type="RefSeq" id="XP_006526015.1">
    <molecule id="Q8BIH0-1"/>
    <property type="nucleotide sequence ID" value="XM_006525952.5"/>
</dbReference>
<dbReference type="RefSeq" id="XP_006526017.1">
    <property type="nucleotide sequence ID" value="XM_006525954.3"/>
</dbReference>
<dbReference type="SMR" id="Q8BIH0"/>
<dbReference type="BioGRID" id="234593">
    <property type="interactions" value="9"/>
</dbReference>
<dbReference type="ComplexPortal" id="CPX-3441">
    <property type="entry name" value="SIN3A histone deacetylase complex, ES cell-specific variant"/>
</dbReference>
<dbReference type="ComplexPortal" id="CPX-3443">
    <property type="entry name" value="SIN3A histone deacetylase complex"/>
</dbReference>
<dbReference type="ComplexPortal" id="CPX-3444">
    <property type="entry name" value="SIN3B histone deacetylase complex"/>
</dbReference>
<dbReference type="FunCoup" id="Q8BIH0">
    <property type="interactions" value="3408"/>
</dbReference>
<dbReference type="IntAct" id="Q8BIH0">
    <property type="interactions" value="1"/>
</dbReference>
<dbReference type="MINT" id="Q8BIH0"/>
<dbReference type="STRING" id="10090.ENSMUSP00000025109"/>
<dbReference type="GlyGen" id="Q8BIH0">
    <property type="glycosylation" value="17 sites, 1 O-linked glycan (15 sites)"/>
</dbReference>
<dbReference type="iPTMnet" id="Q8BIH0"/>
<dbReference type="PhosphoSitePlus" id="Q8BIH0"/>
<dbReference type="jPOST" id="Q8BIH0"/>
<dbReference type="PaxDb" id="10090-ENSMUSP00000136842"/>
<dbReference type="PeptideAtlas" id="Q8BIH0"/>
<dbReference type="ProteomicsDB" id="257286">
    <molecule id="Q8BIH0-1"/>
</dbReference>
<dbReference type="ProteomicsDB" id="257287">
    <molecule id="Q8BIH0-2"/>
</dbReference>
<dbReference type="ProteomicsDB" id="257288">
    <molecule id="Q8BIH0-3"/>
</dbReference>
<dbReference type="Pumba" id="Q8BIH0"/>
<dbReference type="Antibodypedia" id="33473">
    <property type="antibodies" value="164 antibodies from 27 providers"/>
</dbReference>
<dbReference type="Ensembl" id="ENSMUST00000235017.2">
    <molecule id="Q8BIH0-1"/>
    <property type="protein sequence ID" value="ENSMUSP00000157127.2"/>
    <property type="gene ID" value="ENSMUSG00000024260.16"/>
</dbReference>
<dbReference type="GeneID" id="269003"/>
<dbReference type="KEGG" id="mmu:269003"/>
<dbReference type="UCSC" id="uc008eib.1">
    <molecule id="Q8BIH0-1"/>
    <property type="organism name" value="mouse"/>
</dbReference>
<dbReference type="UCSC" id="uc008eie.1">
    <molecule id="Q8BIH0-2"/>
    <property type="organism name" value="mouse"/>
</dbReference>
<dbReference type="AGR" id="MGI:1919782"/>
<dbReference type="CTD" id="79595"/>
<dbReference type="MGI" id="MGI:1919782">
    <property type="gene designation" value="Sap130"/>
</dbReference>
<dbReference type="VEuPathDB" id="HostDB:ENSMUSG00000024260"/>
<dbReference type="eggNOG" id="ENOG502QQ6P">
    <property type="taxonomic scope" value="Eukaryota"/>
</dbReference>
<dbReference type="GeneTree" id="ENSGT00440000037733"/>
<dbReference type="InParanoid" id="Q8BIH0"/>
<dbReference type="OrthoDB" id="10048604at2759"/>
<dbReference type="PhylomeDB" id="Q8BIH0"/>
<dbReference type="BioGRID-ORCS" id="269003">
    <property type="hits" value="20 hits in 83 CRISPR screens"/>
</dbReference>
<dbReference type="ChiTaRS" id="Sap130">
    <property type="organism name" value="mouse"/>
</dbReference>
<dbReference type="PRO" id="PR:Q8BIH0"/>
<dbReference type="Proteomes" id="UP000000589">
    <property type="component" value="Chromosome 18"/>
</dbReference>
<dbReference type="RNAct" id="Q8BIH0">
    <property type="molecule type" value="protein"/>
</dbReference>
<dbReference type="Bgee" id="ENSMUSG00000024260">
    <property type="expression patterns" value="Expressed in animal zygote and 229 other cell types or tissues"/>
</dbReference>
<dbReference type="ExpressionAtlas" id="Q8BIH0">
    <property type="expression patterns" value="baseline and differential"/>
</dbReference>
<dbReference type="GO" id="GO:0016607">
    <property type="term" value="C:nuclear speck"/>
    <property type="evidence" value="ECO:0007669"/>
    <property type="project" value="Ensembl"/>
</dbReference>
<dbReference type="GO" id="GO:0005634">
    <property type="term" value="C:nucleus"/>
    <property type="evidence" value="ECO:0000303"/>
    <property type="project" value="ComplexPortal"/>
</dbReference>
<dbReference type="GO" id="GO:0070822">
    <property type="term" value="C:Sin3-type complex"/>
    <property type="evidence" value="ECO:0000303"/>
    <property type="project" value="ComplexPortal"/>
</dbReference>
<dbReference type="GO" id="GO:0001892">
    <property type="term" value="P:embryonic placenta development"/>
    <property type="evidence" value="ECO:0000316"/>
    <property type="project" value="MGI"/>
</dbReference>
<dbReference type="GO" id="GO:0001701">
    <property type="term" value="P:in utero embryonic development"/>
    <property type="evidence" value="ECO:0000316"/>
    <property type="project" value="MGI"/>
</dbReference>
<dbReference type="GO" id="GO:0030336">
    <property type="term" value="P:negative regulation of cell migration"/>
    <property type="evidence" value="ECO:0000303"/>
    <property type="project" value="ComplexPortal"/>
</dbReference>
<dbReference type="GO" id="GO:1902455">
    <property type="term" value="P:negative regulation of stem cell population maintenance"/>
    <property type="evidence" value="ECO:0000303"/>
    <property type="project" value="ComplexPortal"/>
</dbReference>
<dbReference type="GO" id="GO:0000122">
    <property type="term" value="P:negative regulation of transcription by RNA polymerase II"/>
    <property type="evidence" value="ECO:0000303"/>
    <property type="project" value="ComplexPortal"/>
</dbReference>
<dbReference type="GO" id="GO:0030512">
    <property type="term" value="P:negative regulation of transforming growth factor beta receptor signaling pathway"/>
    <property type="evidence" value="ECO:0000303"/>
    <property type="project" value="ComplexPortal"/>
</dbReference>
<dbReference type="GO" id="GO:1902459">
    <property type="term" value="P:positive regulation of stem cell population maintenance"/>
    <property type="evidence" value="ECO:0000303"/>
    <property type="project" value="ComplexPortal"/>
</dbReference>
<dbReference type="InterPro" id="IPR024137">
    <property type="entry name" value="His_deAcase_cplx_SAP130"/>
</dbReference>
<dbReference type="InterPro" id="IPR031963">
    <property type="entry name" value="SAP130_C"/>
</dbReference>
<dbReference type="PANTHER" id="PTHR13497">
    <property type="entry name" value="HISTONE DEACETYLASE COMPLEX SUBUNIT SAP130"/>
    <property type="match status" value="1"/>
</dbReference>
<dbReference type="PANTHER" id="PTHR13497:SF3">
    <property type="entry name" value="HISTONE DEACETYLASE COMPLEX SUBUNIT SAP130"/>
    <property type="match status" value="1"/>
</dbReference>
<dbReference type="Pfam" id="PF16014">
    <property type="entry name" value="SAP130_C"/>
    <property type="match status" value="1"/>
</dbReference>
<name>SP130_MOUSE</name>
<evidence type="ECO:0000250" key="1"/>
<evidence type="ECO:0000250" key="2">
    <source>
        <dbReference type="UniProtKB" id="Q9H0E3"/>
    </source>
</evidence>
<evidence type="ECO:0000256" key="3">
    <source>
        <dbReference type="SAM" id="MobiDB-lite"/>
    </source>
</evidence>
<evidence type="ECO:0000269" key="4">
    <source>
    </source>
</evidence>
<evidence type="ECO:0000303" key="5">
    <source>
    </source>
</evidence>
<evidence type="ECO:0000303" key="6">
    <source>
    </source>
</evidence>
<evidence type="ECO:0000305" key="7"/>
<evidence type="ECO:0007744" key="8">
    <source>
    </source>
</evidence>
<organism>
    <name type="scientific">Mus musculus</name>
    <name type="common">Mouse</name>
    <dbReference type="NCBI Taxonomy" id="10090"/>
    <lineage>
        <taxon>Eukaryota</taxon>
        <taxon>Metazoa</taxon>
        <taxon>Chordata</taxon>
        <taxon>Craniata</taxon>
        <taxon>Vertebrata</taxon>
        <taxon>Euteleostomi</taxon>
        <taxon>Mammalia</taxon>
        <taxon>Eutheria</taxon>
        <taxon>Euarchontoglires</taxon>
        <taxon>Glires</taxon>
        <taxon>Rodentia</taxon>
        <taxon>Myomorpha</taxon>
        <taxon>Muroidea</taxon>
        <taxon>Muridae</taxon>
        <taxon>Murinae</taxon>
        <taxon>Mus</taxon>
        <taxon>Mus</taxon>
    </lineage>
</organism>
<proteinExistence type="evidence at protein level"/>